<comment type="function">
    <text evidence="1">One of the essential components for the initiation of protein synthesis. Protects formylmethionyl-tRNA from spontaneous hydrolysis and promotes its binding to the 30S ribosomal subunits. Also involved in the hydrolysis of GTP during the formation of the 70S ribosomal complex (By similarity).</text>
</comment>
<comment type="subcellular location">
    <subcellularLocation>
        <location evidence="1">Cytoplasm</location>
    </subcellularLocation>
</comment>
<comment type="similarity">
    <text evidence="3">Belongs to the TRAFAC class translation factor GTPase superfamily. Classic translation factor GTPase family. IF-2 subfamily.</text>
</comment>
<keyword id="KW-0963">Cytoplasm</keyword>
<keyword id="KW-0342">GTP-binding</keyword>
<keyword id="KW-0396">Initiation factor</keyword>
<keyword id="KW-0547">Nucleotide-binding</keyword>
<keyword id="KW-0648">Protein biosynthesis</keyword>
<keyword id="KW-1185">Reference proteome</keyword>
<feature type="chain" id="PRO_0000137269" description="Translation initiation factor IF-2">
    <location>
        <begin position="1"/>
        <end position="1001"/>
    </location>
</feature>
<feature type="domain" description="tr-type G">
    <location>
        <begin position="493"/>
        <end position="666"/>
    </location>
</feature>
<feature type="region of interest" description="Disordered" evidence="2">
    <location>
        <begin position="34"/>
        <end position="404"/>
    </location>
</feature>
<feature type="region of interest" description="G1" evidence="1">
    <location>
        <begin position="502"/>
        <end position="509"/>
    </location>
</feature>
<feature type="region of interest" description="G2" evidence="1">
    <location>
        <begin position="527"/>
        <end position="531"/>
    </location>
</feature>
<feature type="region of interest" description="G3" evidence="1">
    <location>
        <begin position="552"/>
        <end position="555"/>
    </location>
</feature>
<feature type="region of interest" description="G4" evidence="1">
    <location>
        <begin position="606"/>
        <end position="609"/>
    </location>
</feature>
<feature type="region of interest" description="G5" evidence="1">
    <location>
        <begin position="642"/>
        <end position="644"/>
    </location>
</feature>
<feature type="compositionally biased region" description="Basic and acidic residues" evidence="2">
    <location>
        <begin position="67"/>
        <end position="80"/>
    </location>
</feature>
<feature type="compositionally biased region" description="Pro residues" evidence="2">
    <location>
        <begin position="98"/>
        <end position="107"/>
    </location>
</feature>
<feature type="compositionally biased region" description="Pro residues" evidence="2">
    <location>
        <begin position="147"/>
        <end position="157"/>
    </location>
</feature>
<feature type="compositionally biased region" description="Pro residues" evidence="2">
    <location>
        <begin position="163"/>
        <end position="172"/>
    </location>
</feature>
<feature type="compositionally biased region" description="Low complexity" evidence="2">
    <location>
        <begin position="173"/>
        <end position="190"/>
    </location>
</feature>
<feature type="compositionally biased region" description="Basic and acidic residues" evidence="2">
    <location>
        <begin position="212"/>
        <end position="230"/>
    </location>
</feature>
<feature type="compositionally biased region" description="Basic and acidic residues" evidence="2">
    <location>
        <begin position="238"/>
        <end position="252"/>
    </location>
</feature>
<feature type="compositionally biased region" description="Acidic residues" evidence="2">
    <location>
        <begin position="332"/>
        <end position="342"/>
    </location>
</feature>
<feature type="compositionally biased region" description="Low complexity" evidence="2">
    <location>
        <begin position="362"/>
        <end position="371"/>
    </location>
</feature>
<feature type="compositionally biased region" description="Low complexity" evidence="2">
    <location>
        <begin position="385"/>
        <end position="394"/>
    </location>
</feature>
<feature type="compositionally biased region" description="Basic and acidic residues" evidence="2">
    <location>
        <begin position="395"/>
        <end position="404"/>
    </location>
</feature>
<feature type="binding site" evidence="1">
    <location>
        <begin position="502"/>
        <end position="509"/>
    </location>
    <ligand>
        <name>GTP</name>
        <dbReference type="ChEBI" id="CHEBI:37565"/>
    </ligand>
</feature>
<feature type="binding site" evidence="1">
    <location>
        <begin position="552"/>
        <end position="556"/>
    </location>
    <ligand>
        <name>GTP</name>
        <dbReference type="ChEBI" id="CHEBI:37565"/>
    </ligand>
</feature>
<feature type="binding site" evidence="1">
    <location>
        <begin position="606"/>
        <end position="609"/>
    </location>
    <ligand>
        <name>GTP</name>
        <dbReference type="ChEBI" id="CHEBI:37565"/>
    </ligand>
</feature>
<sequence>MNNAKVRIYDLSKELNLENRDILDICERLNVAAKSHSSTISESDAERIKAAAEKFTPQQPKKPRVASRPESKEDKSDPKQQKILAIHHKQEKSGGPSPARPTPPPRPKLQAPKAPTPPQPPVAKASAPKIQKQEEPAQEAPKSVAPPTQPLAPPPVPSLQSPPSKPAPPTPPAKKAAPAPRLAGPPGRTASPNKTAVPAPAKPKVNRPEIVSLKDNRGQARSPGDREEKVAIAAPEPPKPKVELRRPKPPRPEEDENLPELLEFPPLSRGKGVDGDNDADDGDLLSTEKPKPKLKRPTPPRLGKPDQWEDDEDEKANKAKAANKGKRRPKMDDDDDDLDIDGDNGPKPTLVSLSIARPPKPKSLAAKPSTPTVAKVKKPTLKSEAGSSAGGSSRSRGDRRDRKEVVQKPEVIMLDRSLTVRDLADLLKISETDIIKRLFLKGVAVQITQTLDEETARMVAESFEVAVETPERVAAAAKTTEMLDEADLDNLVRRPPVVTIMGHVDHGKTTLLDSIRKTKVAQGEAGGITQHIGAYHVEVEHNDKTEQIVFLDTPGHEAFTAMRARGAKVTDIAILVVAADDGVQPQTKEAISHAKAAGVPLIVAINKVDKPEANPDRIKQELSELGLLAEEWGGDTIMVPVSALNGDNLDGLLEMILLVSEVEELVANPNRQAKGTVIEANLDRTRGPVATLLIQNGTLRVGDAIVVGAVYGKIRAMIDDRGDKVEEASPSFAVEILGLGDVPAAGDEFEVFTNEKDARLQAEARAMEDRQTRLQQAMSSRKVTLSSISAQAQEGELKELNIILKADVQGSLGAILGSLEQLPQGEVQIRVLLASPGEVTETDVDLAAASGAIIIGFNTTLASGARQAADQEGVDIREYDIIYKLLDDIQGAMEGLLDPEEIESSLGTAEVRAVFPVGRGNIAGCYVQSGKIIRNRNLRVRRGDQVLFEGNIDSLKRIKEDVREVNAGYECGIGCSKFNDWKEGDIIEAYEMTMKRRTLAT</sequence>
<evidence type="ECO:0000250" key="1"/>
<evidence type="ECO:0000256" key="2">
    <source>
        <dbReference type="SAM" id="MobiDB-lite"/>
    </source>
</evidence>
<evidence type="ECO:0000305" key="3"/>
<protein>
    <recommendedName>
        <fullName>Translation initiation factor IF-2</fullName>
    </recommendedName>
</protein>
<proteinExistence type="inferred from homology"/>
<organism>
    <name type="scientific">Synechocystis sp. (strain ATCC 27184 / PCC 6803 / Kazusa)</name>
    <dbReference type="NCBI Taxonomy" id="1111708"/>
    <lineage>
        <taxon>Bacteria</taxon>
        <taxon>Bacillati</taxon>
        <taxon>Cyanobacteriota</taxon>
        <taxon>Cyanophyceae</taxon>
        <taxon>Synechococcales</taxon>
        <taxon>Merismopediaceae</taxon>
        <taxon>Synechocystis</taxon>
    </lineage>
</organism>
<gene>
    <name type="primary">infB</name>
    <name type="ordered locus">slr0744</name>
</gene>
<reference key="1">
    <citation type="journal article" date="1996" name="DNA Res.">
        <title>Sequence analysis of the genome of the unicellular cyanobacterium Synechocystis sp. strain PCC6803. II. Sequence determination of the entire genome and assignment of potential protein-coding regions.</title>
        <authorList>
            <person name="Kaneko T."/>
            <person name="Sato S."/>
            <person name="Kotani H."/>
            <person name="Tanaka A."/>
            <person name="Asamizu E."/>
            <person name="Nakamura Y."/>
            <person name="Miyajima N."/>
            <person name="Hirosawa M."/>
            <person name="Sugiura M."/>
            <person name="Sasamoto S."/>
            <person name="Kimura T."/>
            <person name="Hosouchi T."/>
            <person name="Matsuno A."/>
            <person name="Muraki A."/>
            <person name="Nakazaki N."/>
            <person name="Naruo K."/>
            <person name="Okumura S."/>
            <person name="Shimpo S."/>
            <person name="Takeuchi C."/>
            <person name="Wada T."/>
            <person name="Watanabe A."/>
            <person name="Yamada M."/>
            <person name="Yasuda M."/>
            <person name="Tabata S."/>
        </authorList>
    </citation>
    <scope>NUCLEOTIDE SEQUENCE [LARGE SCALE GENOMIC DNA]</scope>
    <source>
        <strain>ATCC 27184 / PCC 6803 / Kazusa</strain>
    </source>
</reference>
<dbReference type="EMBL" id="BA000022">
    <property type="protein sequence ID" value="BAA16696.1"/>
    <property type="molecule type" value="Genomic_DNA"/>
</dbReference>
<dbReference type="PIR" id="S74544">
    <property type="entry name" value="S74544"/>
</dbReference>
<dbReference type="SMR" id="P72689"/>
<dbReference type="FunCoup" id="P72689">
    <property type="interactions" value="476"/>
</dbReference>
<dbReference type="IntAct" id="P72689">
    <property type="interactions" value="4"/>
</dbReference>
<dbReference type="STRING" id="1148.gene:10497551"/>
<dbReference type="PaxDb" id="1148-1651769"/>
<dbReference type="EnsemblBacteria" id="BAA16696">
    <property type="protein sequence ID" value="BAA16696"/>
    <property type="gene ID" value="BAA16696"/>
</dbReference>
<dbReference type="KEGG" id="syn:slr0744"/>
<dbReference type="eggNOG" id="COG0532">
    <property type="taxonomic scope" value="Bacteria"/>
</dbReference>
<dbReference type="InParanoid" id="P72689"/>
<dbReference type="PhylomeDB" id="P72689"/>
<dbReference type="Proteomes" id="UP000001425">
    <property type="component" value="Chromosome"/>
</dbReference>
<dbReference type="GO" id="GO:0005737">
    <property type="term" value="C:cytoplasm"/>
    <property type="evidence" value="ECO:0000318"/>
    <property type="project" value="GO_Central"/>
</dbReference>
<dbReference type="GO" id="GO:0005829">
    <property type="term" value="C:cytosol"/>
    <property type="evidence" value="ECO:0000318"/>
    <property type="project" value="GO_Central"/>
</dbReference>
<dbReference type="GO" id="GO:0005525">
    <property type="term" value="F:GTP binding"/>
    <property type="evidence" value="ECO:0007669"/>
    <property type="project" value="UniProtKB-KW"/>
</dbReference>
<dbReference type="GO" id="GO:0003924">
    <property type="term" value="F:GTPase activity"/>
    <property type="evidence" value="ECO:0007669"/>
    <property type="project" value="UniProtKB-UniRule"/>
</dbReference>
<dbReference type="GO" id="GO:0003743">
    <property type="term" value="F:translation initiation factor activity"/>
    <property type="evidence" value="ECO:0000318"/>
    <property type="project" value="GO_Central"/>
</dbReference>
<dbReference type="GO" id="GO:0006413">
    <property type="term" value="P:translational initiation"/>
    <property type="evidence" value="ECO:0000318"/>
    <property type="project" value="GO_Central"/>
</dbReference>
<dbReference type="CDD" id="cd01887">
    <property type="entry name" value="IF2_eIF5B"/>
    <property type="match status" value="1"/>
</dbReference>
<dbReference type="CDD" id="cd03702">
    <property type="entry name" value="IF2_mtIF2_II"/>
    <property type="match status" value="1"/>
</dbReference>
<dbReference type="CDD" id="cd03692">
    <property type="entry name" value="mtIF2_IVc"/>
    <property type="match status" value="1"/>
</dbReference>
<dbReference type="FunFam" id="2.40.30.10:FF:000007">
    <property type="entry name" value="Translation initiation factor IF-2"/>
    <property type="match status" value="1"/>
</dbReference>
<dbReference type="FunFam" id="2.40.30.10:FF:000008">
    <property type="entry name" value="Translation initiation factor IF-2"/>
    <property type="match status" value="1"/>
</dbReference>
<dbReference type="FunFam" id="3.40.50.10050:FF:000001">
    <property type="entry name" value="Translation initiation factor IF-2"/>
    <property type="match status" value="1"/>
</dbReference>
<dbReference type="FunFam" id="3.40.50.300:FF:000019">
    <property type="entry name" value="Translation initiation factor IF-2"/>
    <property type="match status" value="1"/>
</dbReference>
<dbReference type="Gene3D" id="1.10.10.2480">
    <property type="match status" value="1"/>
</dbReference>
<dbReference type="Gene3D" id="3.40.50.300">
    <property type="entry name" value="P-loop containing nucleotide triphosphate hydrolases"/>
    <property type="match status" value="1"/>
</dbReference>
<dbReference type="Gene3D" id="2.40.30.10">
    <property type="entry name" value="Translation factors"/>
    <property type="match status" value="2"/>
</dbReference>
<dbReference type="Gene3D" id="3.40.50.10050">
    <property type="entry name" value="Translation initiation factor IF- 2, domain 3"/>
    <property type="match status" value="1"/>
</dbReference>
<dbReference type="HAMAP" id="MF_00100_B">
    <property type="entry name" value="IF_2_B"/>
    <property type="match status" value="1"/>
</dbReference>
<dbReference type="InterPro" id="IPR053905">
    <property type="entry name" value="EF-G-like_DII"/>
</dbReference>
<dbReference type="InterPro" id="IPR044145">
    <property type="entry name" value="IF2_II"/>
</dbReference>
<dbReference type="InterPro" id="IPR006847">
    <property type="entry name" value="IF2_N"/>
</dbReference>
<dbReference type="InterPro" id="IPR027417">
    <property type="entry name" value="P-loop_NTPase"/>
</dbReference>
<dbReference type="InterPro" id="IPR005225">
    <property type="entry name" value="Small_GTP-bd"/>
</dbReference>
<dbReference type="InterPro" id="IPR000795">
    <property type="entry name" value="T_Tr_GTP-bd_dom"/>
</dbReference>
<dbReference type="InterPro" id="IPR000178">
    <property type="entry name" value="TF_IF2_bacterial-like"/>
</dbReference>
<dbReference type="InterPro" id="IPR015760">
    <property type="entry name" value="TIF_IF2"/>
</dbReference>
<dbReference type="InterPro" id="IPR023115">
    <property type="entry name" value="TIF_IF2_dom3"/>
</dbReference>
<dbReference type="InterPro" id="IPR036925">
    <property type="entry name" value="TIF_IF2_dom3_sf"/>
</dbReference>
<dbReference type="InterPro" id="IPR009000">
    <property type="entry name" value="Transl_B-barrel_sf"/>
</dbReference>
<dbReference type="NCBIfam" id="TIGR00487">
    <property type="entry name" value="IF-2"/>
    <property type="match status" value="1"/>
</dbReference>
<dbReference type="NCBIfam" id="TIGR00231">
    <property type="entry name" value="small_GTP"/>
    <property type="match status" value="1"/>
</dbReference>
<dbReference type="PANTHER" id="PTHR43381:SF5">
    <property type="entry name" value="TR-TYPE G DOMAIN-CONTAINING PROTEIN"/>
    <property type="match status" value="1"/>
</dbReference>
<dbReference type="PANTHER" id="PTHR43381">
    <property type="entry name" value="TRANSLATION INITIATION FACTOR IF-2-RELATED"/>
    <property type="match status" value="1"/>
</dbReference>
<dbReference type="Pfam" id="PF22042">
    <property type="entry name" value="EF-G_D2"/>
    <property type="match status" value="1"/>
</dbReference>
<dbReference type="Pfam" id="PF00009">
    <property type="entry name" value="GTP_EFTU"/>
    <property type="match status" value="1"/>
</dbReference>
<dbReference type="Pfam" id="PF11987">
    <property type="entry name" value="IF-2"/>
    <property type="match status" value="1"/>
</dbReference>
<dbReference type="Pfam" id="PF04760">
    <property type="entry name" value="IF2_N"/>
    <property type="match status" value="2"/>
</dbReference>
<dbReference type="PRINTS" id="PR00315">
    <property type="entry name" value="ELONGATNFCT"/>
</dbReference>
<dbReference type="SUPFAM" id="SSF52156">
    <property type="entry name" value="Initiation factor IF2/eIF5b, domain 3"/>
    <property type="match status" value="1"/>
</dbReference>
<dbReference type="SUPFAM" id="SSF52540">
    <property type="entry name" value="P-loop containing nucleoside triphosphate hydrolases"/>
    <property type="match status" value="1"/>
</dbReference>
<dbReference type="SUPFAM" id="SSF50447">
    <property type="entry name" value="Translation proteins"/>
    <property type="match status" value="2"/>
</dbReference>
<dbReference type="PROSITE" id="PS51722">
    <property type="entry name" value="G_TR_2"/>
    <property type="match status" value="1"/>
</dbReference>
<dbReference type="PROSITE" id="PS01176">
    <property type="entry name" value="IF2"/>
    <property type="match status" value="1"/>
</dbReference>
<name>IF2_SYNY3</name>
<accession>P72689</accession>